<dbReference type="EC" id="3.2.1.14"/>
<dbReference type="EMBL" id="X07127">
    <property type="protein sequence ID" value="CAA30137.1"/>
    <property type="molecule type" value="Genomic_DNA"/>
</dbReference>
<dbReference type="EMBL" id="X00762">
    <property type="protein sequence ID" value="CAA25334.1"/>
    <property type="molecule type" value="Genomic_DNA"/>
</dbReference>
<dbReference type="EMBL" id="X01095">
    <property type="protein sequence ID" value="CAA25569.1"/>
    <property type="molecule type" value="Genomic_DNA"/>
</dbReference>
<dbReference type="PIR" id="S07915">
    <property type="entry name" value="S07915"/>
</dbReference>
<dbReference type="SMR" id="P09805"/>
<dbReference type="STRING" id="284590.P09805"/>
<dbReference type="CAZy" id="CBM18">
    <property type="family name" value="Carbohydrate-Binding Module Family 18"/>
</dbReference>
<dbReference type="CAZy" id="CBM50">
    <property type="family name" value="Carbohydrate-Binding Module Family 50"/>
</dbReference>
<dbReference type="CAZy" id="GH18">
    <property type="family name" value="Glycoside Hydrolase Family 18"/>
</dbReference>
<dbReference type="PaxDb" id="284590-P09805"/>
<dbReference type="InParanoid" id="P09805"/>
<dbReference type="GO" id="GO:0008061">
    <property type="term" value="F:chitin binding"/>
    <property type="evidence" value="ECO:0007669"/>
    <property type="project" value="UniProtKB-KW"/>
</dbReference>
<dbReference type="GO" id="GO:0008843">
    <property type="term" value="F:endochitinase activity"/>
    <property type="evidence" value="ECO:0007669"/>
    <property type="project" value="UniProtKB-EC"/>
</dbReference>
<dbReference type="GO" id="GO:0090729">
    <property type="term" value="F:toxin activity"/>
    <property type="evidence" value="ECO:0007669"/>
    <property type="project" value="UniProtKB-KW"/>
</dbReference>
<dbReference type="GO" id="GO:0006032">
    <property type="term" value="P:chitin catabolic process"/>
    <property type="evidence" value="ECO:0007669"/>
    <property type="project" value="UniProtKB-KW"/>
</dbReference>
<dbReference type="GO" id="GO:0000272">
    <property type="term" value="P:polysaccharide catabolic process"/>
    <property type="evidence" value="ECO:0007669"/>
    <property type="project" value="UniProtKB-KW"/>
</dbReference>
<dbReference type="CDD" id="cd00035">
    <property type="entry name" value="ChtBD1"/>
    <property type="match status" value="1"/>
</dbReference>
<dbReference type="CDD" id="cd02878">
    <property type="entry name" value="GH18_zymocin_alpha"/>
    <property type="match status" value="1"/>
</dbReference>
<dbReference type="CDD" id="cd00118">
    <property type="entry name" value="LysM"/>
    <property type="match status" value="1"/>
</dbReference>
<dbReference type="Gene3D" id="3.10.50.10">
    <property type="match status" value="1"/>
</dbReference>
<dbReference type="Gene3D" id="3.30.60.10">
    <property type="entry name" value="Endochitinase-like"/>
    <property type="match status" value="1"/>
</dbReference>
<dbReference type="Gene3D" id="3.20.20.80">
    <property type="entry name" value="Glycosidases"/>
    <property type="match status" value="1"/>
</dbReference>
<dbReference type="Gene3D" id="3.10.350.10">
    <property type="entry name" value="LysM domain"/>
    <property type="match status" value="1"/>
</dbReference>
<dbReference type="InterPro" id="IPR001002">
    <property type="entry name" value="Chitin-bd_1"/>
</dbReference>
<dbReference type="InterPro" id="IPR018371">
    <property type="entry name" value="Chitin-binding_1_CS"/>
</dbReference>
<dbReference type="InterPro" id="IPR011583">
    <property type="entry name" value="Chitinase_II/V-like_cat"/>
</dbReference>
<dbReference type="InterPro" id="IPR029070">
    <property type="entry name" value="Chitinase_insertion_sf"/>
</dbReference>
<dbReference type="InterPro" id="IPR036861">
    <property type="entry name" value="Endochitinase-like_sf"/>
</dbReference>
<dbReference type="InterPro" id="IPR001223">
    <property type="entry name" value="Glyco_hydro18_cat"/>
</dbReference>
<dbReference type="InterPro" id="IPR001579">
    <property type="entry name" value="Glyco_hydro_18_chit_AS"/>
</dbReference>
<dbReference type="InterPro" id="IPR017853">
    <property type="entry name" value="Glycoside_hydrolase_SF"/>
</dbReference>
<dbReference type="InterPro" id="IPR053214">
    <property type="entry name" value="LysM12-like"/>
</dbReference>
<dbReference type="InterPro" id="IPR018392">
    <property type="entry name" value="LysM_dom"/>
</dbReference>
<dbReference type="InterPro" id="IPR036779">
    <property type="entry name" value="LysM_dom_sf"/>
</dbReference>
<dbReference type="PANTHER" id="PTHR47700:SF2">
    <property type="entry name" value="CHITINASE"/>
    <property type="match status" value="1"/>
</dbReference>
<dbReference type="PANTHER" id="PTHR47700">
    <property type="entry name" value="V CHITINASE, PUTATIVE (AFU_ORTHOLOGUE AFUA_6G13720)-RELATED"/>
    <property type="match status" value="1"/>
</dbReference>
<dbReference type="Pfam" id="PF00187">
    <property type="entry name" value="Chitin_bind_1"/>
    <property type="match status" value="1"/>
</dbReference>
<dbReference type="Pfam" id="PF00704">
    <property type="entry name" value="Glyco_hydro_18"/>
    <property type="match status" value="1"/>
</dbReference>
<dbReference type="Pfam" id="PF01476">
    <property type="entry name" value="LysM"/>
    <property type="match status" value="1"/>
</dbReference>
<dbReference type="SMART" id="SM00270">
    <property type="entry name" value="ChtBD1"/>
    <property type="match status" value="1"/>
</dbReference>
<dbReference type="SMART" id="SM00636">
    <property type="entry name" value="Glyco_18"/>
    <property type="match status" value="1"/>
</dbReference>
<dbReference type="SMART" id="SM00257">
    <property type="entry name" value="LysM"/>
    <property type="match status" value="1"/>
</dbReference>
<dbReference type="SUPFAM" id="SSF51445">
    <property type="entry name" value="(Trans)glycosidases"/>
    <property type="match status" value="1"/>
</dbReference>
<dbReference type="SUPFAM" id="SSF54556">
    <property type="entry name" value="Chitinase insertion domain"/>
    <property type="match status" value="1"/>
</dbReference>
<dbReference type="SUPFAM" id="SSF54106">
    <property type="entry name" value="LysM domain"/>
    <property type="match status" value="1"/>
</dbReference>
<dbReference type="SUPFAM" id="SSF57016">
    <property type="entry name" value="Plant lectins/antimicrobial peptides"/>
    <property type="match status" value="1"/>
</dbReference>
<dbReference type="PROSITE" id="PS00026">
    <property type="entry name" value="CHIT_BIND_I_1"/>
    <property type="match status" value="1"/>
</dbReference>
<dbReference type="PROSITE" id="PS50941">
    <property type="entry name" value="CHIT_BIND_I_2"/>
    <property type="match status" value="1"/>
</dbReference>
<dbReference type="PROSITE" id="PS01095">
    <property type="entry name" value="GH18_1"/>
    <property type="match status" value="1"/>
</dbReference>
<dbReference type="PROSITE" id="PS51910">
    <property type="entry name" value="GH18_2"/>
    <property type="match status" value="1"/>
</dbReference>
<dbReference type="PROSITE" id="PS51782">
    <property type="entry name" value="LYSM"/>
    <property type="match status" value="1"/>
</dbReference>
<comment type="function">
    <text>The alpha subunit is a potent exochitinase. Along with the beta subunit it plays a role in the initial interaction of the toxin with sensitive cells and allow the gamma subunit (the active toxin) to gain entry into the cell.</text>
</comment>
<comment type="catalytic activity">
    <reaction>
        <text>Random endo-hydrolysis of N-acetyl-beta-D-glucosaminide (1-&gt;4)-beta-linkages in chitin and chitodextrins.</text>
        <dbReference type="EC" id="3.2.1.14"/>
    </reaction>
</comment>
<comment type="subunit">
    <text>The killer toxin is composed of three subunits: alpha, beta and gamma.</text>
</comment>
<comment type="PTM">
    <text>RF2 is potentially split by membrane-bound basic amino acid-specific peptidase to yield the alpha and beta subunits.</text>
</comment>
<comment type="similarity">
    <text evidence="4">Belongs to the glycosyl hydrolase 18 family.</text>
</comment>
<organism>
    <name type="scientific">Kluyveromyces lactis (strain ATCC 8585 / CBS 2359 / DSM 70799 / NBRC 1267 / NRRL Y-1140 / WM37)</name>
    <name type="common">Yeast</name>
    <name type="synonym">Candida sphaerica</name>
    <dbReference type="NCBI Taxonomy" id="284590"/>
    <lineage>
        <taxon>Eukaryota</taxon>
        <taxon>Fungi</taxon>
        <taxon>Dikarya</taxon>
        <taxon>Ascomycota</taxon>
        <taxon>Saccharomycotina</taxon>
        <taxon>Saccharomycetes</taxon>
        <taxon>Saccharomycetales</taxon>
        <taxon>Saccharomycetaceae</taxon>
        <taxon>Kluyveromyces</taxon>
    </lineage>
</organism>
<feature type="signal peptide" evidence="1">
    <location>
        <begin position="1"/>
        <end position="17"/>
    </location>
</feature>
<feature type="propeptide" id="PRO_0000011938" evidence="1">
    <location>
        <begin position="18"/>
        <end position="29"/>
    </location>
</feature>
<feature type="chain" id="PRO_0000011939" description="Killer toxin subunit alpha" evidence="5">
    <location>
        <begin position="30"/>
        <end position="892"/>
    </location>
</feature>
<feature type="chain" id="PRO_0000011940" description="Killer toxin subunit beta" evidence="5">
    <location>
        <begin position="895"/>
        <end position="1146"/>
    </location>
</feature>
<feature type="domain" description="LysM 1">
    <location>
        <begin position="205"/>
        <end position="234"/>
    </location>
</feature>
<feature type="domain" description="LysM 2" evidence="3">
    <location>
        <begin position="254"/>
        <end position="303"/>
    </location>
</feature>
<feature type="domain" description="Chitin-binding type-1" evidence="2">
    <location>
        <begin position="316"/>
        <end position="372"/>
    </location>
</feature>
<feature type="domain" description="GH18" evidence="4">
    <location>
        <begin position="383"/>
        <end position="735"/>
    </location>
</feature>
<feature type="active site" description="Proton donor" evidence="4">
    <location>
        <position position="495"/>
    </location>
</feature>
<feature type="binding site" evidence="4">
    <location>
        <position position="424"/>
    </location>
    <ligand>
        <name>chitin</name>
        <dbReference type="ChEBI" id="CHEBI:17029"/>
    </ligand>
</feature>
<feature type="binding site" evidence="4">
    <location>
        <begin position="447"/>
        <end position="450"/>
    </location>
    <ligand>
        <name>chitin</name>
        <dbReference type="ChEBI" id="CHEBI:17029"/>
    </ligand>
</feature>
<feature type="binding site" evidence="4">
    <location>
        <position position="496"/>
    </location>
    <ligand>
        <name>chitin</name>
        <dbReference type="ChEBI" id="CHEBI:17029"/>
    </ligand>
</feature>
<feature type="binding site" evidence="4">
    <location>
        <begin position="562"/>
        <end position="565"/>
    </location>
    <ligand>
        <name>chitin</name>
        <dbReference type="ChEBI" id="CHEBI:17029"/>
    </ligand>
</feature>
<feature type="binding site" evidence="4">
    <location>
        <position position="707"/>
    </location>
    <ligand>
        <name>chitin</name>
        <dbReference type="ChEBI" id="CHEBI:17029"/>
    </ligand>
</feature>
<feature type="glycosylation site" description="N-linked (GlcNAc...) asparagine" evidence="1">
    <location>
        <position position="771"/>
    </location>
</feature>
<feature type="glycosylation site" description="N-linked (GlcNAc...) asparagine" evidence="1">
    <location>
        <position position="858"/>
    </location>
</feature>
<feature type="glycosylation site" description="N-linked (GlcNAc...) asparagine" evidence="1">
    <location>
        <position position="868"/>
    </location>
</feature>
<feature type="glycosylation site" description="N-linked (GlcNAc...) asparagine" evidence="1">
    <location>
        <position position="876"/>
    </location>
</feature>
<feature type="glycosylation site" description="N-linked (GlcNAc...) asparagine" evidence="1">
    <location>
        <position position="1117"/>
    </location>
</feature>
<feature type="disulfide bond" evidence="2">
    <location>
        <begin position="319"/>
        <end position="338"/>
    </location>
</feature>
<feature type="disulfide bond" evidence="2">
    <location>
        <begin position="332"/>
        <end position="344"/>
    </location>
</feature>
<feature type="disulfide bond" evidence="2">
    <location>
        <begin position="337"/>
        <end position="351"/>
    </location>
</feature>
<feature type="disulfide bond" evidence="2">
    <location>
        <begin position="366"/>
        <end position="370"/>
    </location>
</feature>
<evidence type="ECO:0000255" key="1"/>
<evidence type="ECO:0000255" key="2">
    <source>
        <dbReference type="PROSITE-ProRule" id="PRU00261"/>
    </source>
</evidence>
<evidence type="ECO:0000255" key="3">
    <source>
        <dbReference type="PROSITE-ProRule" id="PRU01118"/>
    </source>
</evidence>
<evidence type="ECO:0000255" key="4">
    <source>
        <dbReference type="PROSITE-ProRule" id="PRU01258"/>
    </source>
</evidence>
<evidence type="ECO:0000305" key="5"/>
<sequence>MNIFYIFLFLLSFVQGLEHTHRRGSLVKRAVCYDTDQVPLNIFFGYNRADKTDSNKNMALNIFNVFRGFLAGEGGESFYNSNGNVYGFMWVGSMVHNRGFKDNILPIMENEVKNYGIPKTLYLEYDGGGDPMKSFGIILDTTSRDTVVKAAKLWSQGKKLNSYEGSKNYQATACYLSYAYRKPIVNDNFVGTCDYFTLESGKTPADQSGINGESLQGYNPNLDFSKLSAGQPICKTIGNPPNFKPSKNSDGSCKTYKVSSGESCSSIAVKYYPLSLNDIENYNKGNYGWKGCSSLQKDYNLCVSDGSAPRPVSNPIAECGPLAPGEKYNAKCPLNACCSEFGFCGLTKDYCDKKSSTTGAPGTDGCFSNCGYGSTSNVKSSTFKKIAYWLDAKDKLAMDPKNIPNGPYDILHYAFVNINSDFSIDDSAFSKSAFLKVTSSKKIPSFGGWDFSTSPSTYTIFRNAVKTDQNRNTFANNLINFMNKYNLDGIDLDWEYPGAPDIPDIPADDSSSGSNYLTFLKLLKGKMPSGKTLSIAIPSSYWYLKNFPISDIQNTVDYMVYMTYDIHGIWEYGKANSYINCHTPRKEIEDAIKMLDKAGVKFNKVFGGVANYGRSYKMVNTNCYNYGCGFQREGGNSRDMTNTPGVLSDSEIIDIDSSDKKNDRWVDTNTDCIFMKYDGNSVVSWPKSRYDLEDMFKNYGFAGTSLWAANYFKHDEWKNDEDDNNDDTEDPFDEENVYFDVYDCKNKAGYDLDNPVYGCRLETAINIIIWNGTESVNTVLNILNDYDNYIKYYEALTRAHYDSVMEKYEKWLFEEDGYYTYYTDVDGDDIIITPPDKKKRDYIQEKYSFEKEFMMSQNMTELTEIKVNKTINFMLNGTSLAVKEYNNEKVLYKRGDIPPPGSNNRLIRNSIILDKDKEAAIASFKQYSGIELSKDSFVQRDKDKKFDLNGKHYTFMHSTILNAIVLFPNVLTNIDSDYIHHISDLIEQAHNSLGNESPDNIYEVLESVVVFMSVSEIADYTYTEGKKIKEKYDKMKKTMIVGIILGIIGGLSLFLGPIGIATSVLADFALLGADAAINGELNPSDLAFALAGLFLPVFASLGKTFKFAEALQKININKSKNFDNLNEFEKIRFFRSKLGKVKMCGS</sequence>
<proteinExistence type="evidence at protein level"/>
<name>KTXA_KLULA</name>
<protein>
    <recommendedName>
        <fullName>Killer toxin subunits alpha/beta</fullName>
    </recommendedName>
    <alternativeName>
        <fullName>RF2 protein</fullName>
    </alternativeName>
    <component>
        <recommendedName>
            <fullName>Killer toxin subunit alpha</fullName>
        </recommendedName>
    </component>
    <component>
        <recommendedName>
            <fullName>Killer toxin subunit beta</fullName>
            <ecNumber>3.2.1.14</ecNumber>
        </recommendedName>
        <alternativeName>
            <fullName>Endochitinase</fullName>
        </alternativeName>
    </component>
</protein>
<reference key="1">
    <citation type="journal article" date="1985" name="Curr. Genet.">
        <title>Structure of a linear plasmid of the yeast Kluyveromyces lactis; compact organization of the killer genome.</title>
        <authorList>
            <person name="Sor F."/>
            <person name="Fukuhara H."/>
        </authorList>
    </citation>
    <scope>NUCLEOTIDE SEQUENCE [GENOMIC DNA]</scope>
    <source>
        <strain>ATCC 76492 / CBS 2359/152 / CLIB 210</strain>
    </source>
</reference>
<reference key="2">
    <citation type="journal article" date="1984" name="Nucleic Acids Res.">
        <title>Nucleotide sequence and transcription analysis of a linear DNA plasmid associated with the killer character of the yeast Kluyveromyces lactis.</title>
        <authorList>
            <person name="Stark M.J.R."/>
            <person name="Mileham A.J."/>
            <person name="Romanos M.A."/>
            <person name="Boyd A."/>
        </authorList>
    </citation>
    <scope>NUCLEOTIDE SEQUENCE [GENOMIC DNA]</scope>
    <source>
        <strain>ATCC 8585 / CBS 2359 / DSM 70799 / NBRC 1267 / NRRL Y-1140 / WM37</strain>
    </source>
</reference>
<reference key="3">
    <citation type="journal article" date="1984" name="Nucleic Acids Res.">
        <title>Cloning and nucleotide sequences of the linear DNA killer plasmids from yeast.</title>
        <authorList>
            <person name="Hishinuma F."/>
            <person name="Nakamura K."/>
            <person name="Hirai K."/>
            <person name="Nishizawa R."/>
            <person name="Gunge N."/>
            <person name="Maeda T."/>
        </authorList>
    </citation>
    <scope>NUCLEOTIDE SEQUENCE [GENOMIC DNA]</scope>
    <source>
        <strain>ATCC 52735 / 2105-1D</strain>
    </source>
</reference>
<reference key="4">
    <citation type="journal article" date="1986" name="EMBO J.">
        <title>The killer toxin of Kluyveromyces lactis: characterization of the toxin subunits and identification of the genes which encode them.</title>
        <authorList>
            <person name="Stark M.J.R."/>
            <person name="Boyd A."/>
        </authorList>
    </citation>
    <scope>IDENTIFICATION OF PROTEIN</scope>
    <scope>PROTEIN SEQUENCE OF 30-44 AND 895-916</scope>
</reference>
<reference key="5">
    <citation type="journal article" date="1990" name="Nature">
        <title>Killer toxins.</title>
        <authorList>
            <person name="Bradshaw H.D. Jr."/>
        </authorList>
    </citation>
    <scope>SIMILARITY TO CHITINASE OF ALPHA-SUBUNIT</scope>
</reference>
<reference key="6">
    <citation type="journal article" date="1991" name="Eur. J. Biochem.">
        <title>Kluyveromyces lactis toxin has an essential chitinase activity.</title>
        <authorList>
            <person name="Butler A.R."/>
            <person name="O'Donnell R.W."/>
            <person name="Martin V.J."/>
            <person name="Gooday G.W."/>
            <person name="Stark M.J.R."/>
        </authorList>
    </citation>
    <scope>CHITINASE ACTIVITY OF ALPHA-SUBUNIT</scope>
</reference>
<geneLocation type="plasmid">
    <name>pGKl-1</name>
</geneLocation>
<keyword id="KW-0119">Carbohydrate metabolism</keyword>
<keyword id="KW-0146">Chitin degradation</keyword>
<keyword id="KW-0147">Chitin-binding</keyword>
<keyword id="KW-0165">Cleavage on pair of basic residues</keyword>
<keyword id="KW-0903">Direct protein sequencing</keyword>
<keyword id="KW-1015">Disulfide bond</keyword>
<keyword id="KW-0325">Glycoprotein</keyword>
<keyword id="KW-0326">Glycosidase</keyword>
<keyword id="KW-0378">Hydrolase</keyword>
<keyword id="KW-0614">Plasmid</keyword>
<keyword id="KW-0624">Polysaccharide degradation</keyword>
<keyword id="KW-0677">Repeat</keyword>
<keyword id="KW-0732">Signal</keyword>
<keyword id="KW-0800">Toxin</keyword>
<accession>P09805</accession>